<name>GUN3_ORYSJ</name>
<reference key="1">
    <citation type="journal article" date="2002" name="Nature">
        <title>The genome sequence and structure of rice chromosome 1.</title>
        <authorList>
            <person name="Sasaki T."/>
            <person name="Matsumoto T."/>
            <person name="Yamamoto K."/>
            <person name="Sakata K."/>
            <person name="Baba T."/>
            <person name="Katayose Y."/>
            <person name="Wu J."/>
            <person name="Niimura Y."/>
            <person name="Cheng Z."/>
            <person name="Nagamura Y."/>
            <person name="Antonio B.A."/>
            <person name="Kanamori H."/>
            <person name="Hosokawa S."/>
            <person name="Masukawa M."/>
            <person name="Arikawa K."/>
            <person name="Chiden Y."/>
            <person name="Hayashi M."/>
            <person name="Okamoto M."/>
            <person name="Ando T."/>
            <person name="Aoki H."/>
            <person name="Arita K."/>
            <person name="Hamada M."/>
            <person name="Harada C."/>
            <person name="Hijishita S."/>
            <person name="Honda M."/>
            <person name="Ichikawa Y."/>
            <person name="Idonuma A."/>
            <person name="Iijima M."/>
            <person name="Ikeda M."/>
            <person name="Ikeno M."/>
            <person name="Ito S."/>
            <person name="Ito T."/>
            <person name="Ito Y."/>
            <person name="Ito Y."/>
            <person name="Iwabuchi A."/>
            <person name="Kamiya K."/>
            <person name="Karasawa W."/>
            <person name="Katagiri S."/>
            <person name="Kikuta A."/>
            <person name="Kobayashi N."/>
            <person name="Kono I."/>
            <person name="Machita K."/>
            <person name="Maehara T."/>
            <person name="Mizuno H."/>
            <person name="Mizubayashi T."/>
            <person name="Mukai Y."/>
            <person name="Nagasaki H."/>
            <person name="Nakashima M."/>
            <person name="Nakama Y."/>
            <person name="Nakamichi Y."/>
            <person name="Nakamura M."/>
            <person name="Namiki N."/>
            <person name="Negishi M."/>
            <person name="Ohta I."/>
            <person name="Ono N."/>
            <person name="Saji S."/>
            <person name="Sakai K."/>
            <person name="Shibata M."/>
            <person name="Shimokawa T."/>
            <person name="Shomura A."/>
            <person name="Song J."/>
            <person name="Takazaki Y."/>
            <person name="Terasawa K."/>
            <person name="Tsuji K."/>
            <person name="Waki K."/>
            <person name="Yamagata H."/>
            <person name="Yamane H."/>
            <person name="Yoshiki S."/>
            <person name="Yoshihara R."/>
            <person name="Yukawa K."/>
            <person name="Zhong H."/>
            <person name="Iwama H."/>
            <person name="Endo T."/>
            <person name="Ito H."/>
            <person name="Hahn J.H."/>
            <person name="Kim H.-I."/>
            <person name="Eun M.-Y."/>
            <person name="Yano M."/>
            <person name="Jiang J."/>
            <person name="Gojobori T."/>
        </authorList>
    </citation>
    <scope>NUCLEOTIDE SEQUENCE [LARGE SCALE GENOMIC DNA]</scope>
    <source>
        <strain>cv. Nipponbare</strain>
    </source>
</reference>
<reference key="2">
    <citation type="journal article" date="2005" name="Nature">
        <title>The map-based sequence of the rice genome.</title>
        <authorList>
            <consortium name="International rice genome sequencing project (IRGSP)"/>
        </authorList>
    </citation>
    <scope>NUCLEOTIDE SEQUENCE [LARGE SCALE GENOMIC DNA]</scope>
    <source>
        <strain>cv. Nipponbare</strain>
    </source>
</reference>
<reference key="3">
    <citation type="journal article" date="2008" name="Nucleic Acids Res.">
        <title>The rice annotation project database (RAP-DB): 2008 update.</title>
        <authorList>
            <consortium name="The rice annotation project (RAP)"/>
        </authorList>
    </citation>
    <scope>GENOME REANNOTATION</scope>
    <source>
        <strain>cv. Nipponbare</strain>
    </source>
</reference>
<reference key="4">
    <citation type="journal article" date="2013" name="Rice">
        <title>Improvement of the Oryza sativa Nipponbare reference genome using next generation sequence and optical map data.</title>
        <authorList>
            <person name="Kawahara Y."/>
            <person name="de la Bastide M."/>
            <person name="Hamilton J.P."/>
            <person name="Kanamori H."/>
            <person name="McCombie W.R."/>
            <person name="Ouyang S."/>
            <person name="Schwartz D.C."/>
            <person name="Tanaka T."/>
            <person name="Wu J."/>
            <person name="Zhou S."/>
            <person name="Childs K.L."/>
            <person name="Davidson R.M."/>
            <person name="Lin H."/>
            <person name="Quesada-Ocampo L."/>
            <person name="Vaillancourt B."/>
            <person name="Sakai H."/>
            <person name="Lee S.S."/>
            <person name="Kim J."/>
            <person name="Numa H."/>
            <person name="Itoh T."/>
            <person name="Buell C.R."/>
            <person name="Matsumoto T."/>
        </authorList>
    </citation>
    <scope>GENOME REANNOTATION</scope>
    <source>
        <strain>cv. Nipponbare</strain>
    </source>
</reference>
<reference key="5">
    <citation type="journal article" date="2005" name="PLoS Biol.">
        <title>The genomes of Oryza sativa: a history of duplications.</title>
        <authorList>
            <person name="Yu J."/>
            <person name="Wang J."/>
            <person name="Lin W."/>
            <person name="Li S."/>
            <person name="Li H."/>
            <person name="Zhou J."/>
            <person name="Ni P."/>
            <person name="Dong W."/>
            <person name="Hu S."/>
            <person name="Zeng C."/>
            <person name="Zhang J."/>
            <person name="Zhang Y."/>
            <person name="Li R."/>
            <person name="Xu Z."/>
            <person name="Li S."/>
            <person name="Li X."/>
            <person name="Zheng H."/>
            <person name="Cong L."/>
            <person name="Lin L."/>
            <person name="Yin J."/>
            <person name="Geng J."/>
            <person name="Li G."/>
            <person name="Shi J."/>
            <person name="Liu J."/>
            <person name="Lv H."/>
            <person name="Li J."/>
            <person name="Wang J."/>
            <person name="Deng Y."/>
            <person name="Ran L."/>
            <person name="Shi X."/>
            <person name="Wang X."/>
            <person name="Wu Q."/>
            <person name="Li C."/>
            <person name="Ren X."/>
            <person name="Wang J."/>
            <person name="Wang X."/>
            <person name="Li D."/>
            <person name="Liu D."/>
            <person name="Zhang X."/>
            <person name="Ji Z."/>
            <person name="Zhao W."/>
            <person name="Sun Y."/>
            <person name="Zhang Z."/>
            <person name="Bao J."/>
            <person name="Han Y."/>
            <person name="Dong L."/>
            <person name="Ji J."/>
            <person name="Chen P."/>
            <person name="Wu S."/>
            <person name="Liu J."/>
            <person name="Xiao Y."/>
            <person name="Bu D."/>
            <person name="Tan J."/>
            <person name="Yang L."/>
            <person name="Ye C."/>
            <person name="Zhang J."/>
            <person name="Xu J."/>
            <person name="Zhou Y."/>
            <person name="Yu Y."/>
            <person name="Zhang B."/>
            <person name="Zhuang S."/>
            <person name="Wei H."/>
            <person name="Liu B."/>
            <person name="Lei M."/>
            <person name="Yu H."/>
            <person name="Li Y."/>
            <person name="Xu H."/>
            <person name="Wei S."/>
            <person name="He X."/>
            <person name="Fang L."/>
            <person name="Zhang Z."/>
            <person name="Zhang Y."/>
            <person name="Huang X."/>
            <person name="Su Z."/>
            <person name="Tong W."/>
            <person name="Li J."/>
            <person name="Tong Z."/>
            <person name="Li S."/>
            <person name="Ye J."/>
            <person name="Wang L."/>
            <person name="Fang L."/>
            <person name="Lei T."/>
            <person name="Chen C.-S."/>
            <person name="Chen H.-C."/>
            <person name="Xu Z."/>
            <person name="Li H."/>
            <person name="Huang H."/>
            <person name="Zhang F."/>
            <person name="Xu H."/>
            <person name="Li N."/>
            <person name="Zhao C."/>
            <person name="Li S."/>
            <person name="Dong L."/>
            <person name="Huang Y."/>
            <person name="Li L."/>
            <person name="Xi Y."/>
            <person name="Qi Q."/>
            <person name="Li W."/>
            <person name="Zhang B."/>
            <person name="Hu W."/>
            <person name="Zhang Y."/>
            <person name="Tian X."/>
            <person name="Jiao Y."/>
            <person name="Liang X."/>
            <person name="Jin J."/>
            <person name="Gao L."/>
            <person name="Zheng W."/>
            <person name="Hao B."/>
            <person name="Liu S.-M."/>
            <person name="Wang W."/>
            <person name="Yuan L."/>
            <person name="Cao M."/>
            <person name="McDermott J."/>
            <person name="Samudrala R."/>
            <person name="Wang J."/>
            <person name="Wong G.K.-S."/>
            <person name="Yang H."/>
        </authorList>
    </citation>
    <scope>NUCLEOTIDE SEQUENCE [LARGE SCALE GENOMIC DNA]</scope>
    <source>
        <strain>cv. Nipponbare</strain>
    </source>
</reference>
<reference key="6">
    <citation type="journal article" date="2003" name="Science">
        <title>Collection, mapping, and annotation of over 28,000 cDNA clones from japonica rice.</title>
        <authorList>
            <consortium name="The rice full-length cDNA consortium"/>
        </authorList>
    </citation>
    <scope>NUCLEOTIDE SEQUENCE [LARGE SCALE MRNA]</scope>
    <source>
        <strain>cv. Nipponbare</strain>
    </source>
</reference>
<reference key="7">
    <citation type="journal article" date="2006" name="Plant Mol. Biol.">
        <title>OsGLU1, a putative membrane-bound endo-1,4-beta-D-glucanase from rice, affects plant internode elongation.</title>
        <authorList>
            <person name="Zhou H.-L."/>
            <person name="He S.-J."/>
            <person name="Cao Y.-R."/>
            <person name="Chen T."/>
            <person name="Du B.-X."/>
            <person name="Chu C.-C."/>
            <person name="Zhang J.-S."/>
            <person name="Chen S.-Y."/>
        </authorList>
    </citation>
    <scope>TISSUE SPECIFICITY</scope>
</reference>
<comment type="catalytic activity">
    <reaction>
        <text>Endohydrolysis of (1-&gt;4)-beta-D-glucosidic linkages in cellulose, lichenin and cereal beta-D-glucans.</text>
        <dbReference type="EC" id="3.2.1.4"/>
    </reaction>
</comment>
<comment type="subcellular location">
    <subcellularLocation>
        <location evidence="1">Secreted</location>
    </subcellularLocation>
</comment>
<comment type="tissue specificity">
    <text evidence="5">Expressed in flowers.</text>
</comment>
<comment type="similarity">
    <text evidence="4 6">Belongs to the glycosyl hydrolase 9 (cellulase E) family.</text>
</comment>
<accession>Q8LQ92</accession>
<accession>B9EVS7</accession>
<accession>Q0JN97</accession>
<feature type="signal peptide" evidence="2">
    <location>
        <begin position="1"/>
        <end position="19"/>
    </location>
</feature>
<feature type="chain" id="PRO_0000249280" description="Endoglucanase 3">
    <location>
        <begin position="20"/>
        <end position="499"/>
    </location>
</feature>
<feature type="active site" description="Nucleophile" evidence="4">
    <location>
        <position position="88"/>
    </location>
</feature>
<feature type="active site" evidence="3">
    <location>
        <position position="416"/>
    </location>
</feature>
<feature type="active site" evidence="3">
    <location>
        <position position="467"/>
    </location>
</feature>
<feature type="active site" evidence="3">
    <location>
        <position position="476"/>
    </location>
</feature>
<feature type="sequence conflict" description="In Ref. 6; AK106887." evidence="6" ref="6">
    <original>F</original>
    <variation>S</variation>
    <location>
        <position position="94"/>
    </location>
</feature>
<organism>
    <name type="scientific">Oryza sativa subsp. japonica</name>
    <name type="common">Rice</name>
    <dbReference type="NCBI Taxonomy" id="39947"/>
    <lineage>
        <taxon>Eukaryota</taxon>
        <taxon>Viridiplantae</taxon>
        <taxon>Streptophyta</taxon>
        <taxon>Embryophyta</taxon>
        <taxon>Tracheophyta</taxon>
        <taxon>Spermatophyta</taxon>
        <taxon>Magnoliopsida</taxon>
        <taxon>Liliopsida</taxon>
        <taxon>Poales</taxon>
        <taxon>Poaceae</taxon>
        <taxon>BOP clade</taxon>
        <taxon>Oryzoideae</taxon>
        <taxon>Oryzeae</taxon>
        <taxon>Oryzinae</taxon>
        <taxon>Oryza</taxon>
        <taxon>Oryza sativa</taxon>
    </lineage>
</organism>
<keyword id="KW-0119">Carbohydrate metabolism</keyword>
<keyword id="KW-0961">Cell wall biogenesis/degradation</keyword>
<keyword id="KW-0136">Cellulose degradation</keyword>
<keyword id="KW-0326">Glycosidase</keyword>
<keyword id="KW-0378">Hydrolase</keyword>
<keyword id="KW-0624">Polysaccharide degradation</keyword>
<keyword id="KW-1185">Reference proteome</keyword>
<keyword id="KW-0964">Secreted</keyword>
<keyword id="KW-0732">Signal</keyword>
<protein>
    <recommendedName>
        <fullName>Endoglucanase 3</fullName>
        <ecNumber>3.2.1.4</ecNumber>
    </recommendedName>
    <alternativeName>
        <fullName>Endo-1,4-beta glucanase 3</fullName>
    </alternativeName>
    <alternativeName>
        <fullName>OsGLU8</fullName>
    </alternativeName>
</protein>
<gene>
    <name type="primary">GLU8</name>
    <name type="ordered locus">Os01g0312800</name>
    <name type="ordered locus">LOC_Os01g21070</name>
    <name type="ORF">B1011A07.26</name>
    <name evidence="7" type="ORF">OsJ_01487</name>
</gene>
<evidence type="ECO:0000250" key="1"/>
<evidence type="ECO:0000255" key="2"/>
<evidence type="ECO:0000255" key="3">
    <source>
        <dbReference type="PROSITE-ProRule" id="PRU10059"/>
    </source>
</evidence>
<evidence type="ECO:0000255" key="4">
    <source>
        <dbReference type="PROSITE-ProRule" id="PRU10140"/>
    </source>
</evidence>
<evidence type="ECO:0000269" key="5">
    <source>
    </source>
</evidence>
<evidence type="ECO:0000305" key="6"/>
<evidence type="ECO:0000312" key="7">
    <source>
        <dbReference type="EMBL" id="EEE54426.1"/>
    </source>
</evidence>
<proteinExistence type="evidence at transcript level"/>
<sequence length="499" mass="54427">MALLRCLFLLAVLLPHRNAAVVAAASPHHGPAPHDYRDALTKSILFFEGQRSGKLPPSQRVSWRGDSGLSDGSSIKVDLVGGYYDAGDNMKFGFPLAFSMTMLAWSVVEFGGLMKGELQHARDAVRWGSDYLLKATAHPDTVYVQVGDANRDHACWERPEDMDTPRTVYKVDPSTPGTDVAAETAAALAAASLVFRKSDPAYASRLVARAKRVFEFADKHRGTYSTRLSPYVCPYYCSYSGYQDELLWGAAWLHRATKNPTYLSYIQMNGQVLGADEQDNTFGWDNKHAGARILIAKAFLVQKVAALHEYKGHADSFICSMVPGTPTDQTQYTRGGLLFKLSDSNMQYVTSSSFLLLTYAKYLAFSKTTVSCGGAAVTPARLRAIARQQVDYLLGSNPMGMSYMVGYGAKYPRRIHHRASSLPSVAAHPARIGCSQGFTALYSGVANPNVLVGAVVGGPNLQDQFPDQRSDHEHSEPATYINAPLVGALAYLAHSYGQL</sequence>
<dbReference type="EC" id="3.2.1.4"/>
<dbReference type="EMBL" id="AP003722">
    <property type="protein sequence ID" value="BAB92772.1"/>
    <property type="molecule type" value="Genomic_DNA"/>
</dbReference>
<dbReference type="EMBL" id="AP008207">
    <property type="protein sequence ID" value="BAF04781.2"/>
    <property type="molecule type" value="Genomic_DNA"/>
</dbReference>
<dbReference type="EMBL" id="AP014957">
    <property type="protein sequence ID" value="BAS71793.1"/>
    <property type="molecule type" value="Genomic_DNA"/>
</dbReference>
<dbReference type="EMBL" id="CM000138">
    <property type="protein sequence ID" value="EEE54426.1"/>
    <property type="molecule type" value="Genomic_DNA"/>
</dbReference>
<dbReference type="EMBL" id="AK106887">
    <property type="status" value="NOT_ANNOTATED_CDS"/>
    <property type="molecule type" value="mRNA"/>
</dbReference>
<dbReference type="RefSeq" id="XP_015625766.1">
    <property type="nucleotide sequence ID" value="XM_015770280.1"/>
</dbReference>
<dbReference type="SMR" id="Q8LQ92"/>
<dbReference type="FunCoup" id="Q8LQ92">
    <property type="interactions" value="156"/>
</dbReference>
<dbReference type="STRING" id="39947.Q8LQ92"/>
<dbReference type="CAZy" id="GH9">
    <property type="family name" value="Glycoside Hydrolase Family 9"/>
</dbReference>
<dbReference type="PaxDb" id="39947-Q8LQ92"/>
<dbReference type="EnsemblPlants" id="Os01t0312800-01">
    <property type="protein sequence ID" value="Os01t0312800-01"/>
    <property type="gene ID" value="Os01g0312800"/>
</dbReference>
<dbReference type="Gramene" id="Os01t0312800-01">
    <property type="protein sequence ID" value="Os01t0312800-01"/>
    <property type="gene ID" value="Os01g0312800"/>
</dbReference>
<dbReference type="KEGG" id="dosa:Os01g0312800"/>
<dbReference type="eggNOG" id="ENOG502QPI6">
    <property type="taxonomic scope" value="Eukaryota"/>
</dbReference>
<dbReference type="HOGENOM" id="CLU_008926_1_2_1"/>
<dbReference type="InParanoid" id="Q8LQ92"/>
<dbReference type="OMA" id="NWDSKTP"/>
<dbReference type="OrthoDB" id="10257085at2759"/>
<dbReference type="Proteomes" id="UP000000763">
    <property type="component" value="Chromosome 1"/>
</dbReference>
<dbReference type="Proteomes" id="UP000007752">
    <property type="component" value="Chromosome 1"/>
</dbReference>
<dbReference type="Proteomes" id="UP000059680">
    <property type="component" value="Chromosome 1"/>
</dbReference>
<dbReference type="GO" id="GO:0005576">
    <property type="term" value="C:extracellular region"/>
    <property type="evidence" value="ECO:0007669"/>
    <property type="project" value="UniProtKB-SubCell"/>
</dbReference>
<dbReference type="GO" id="GO:0008810">
    <property type="term" value="F:cellulase activity"/>
    <property type="evidence" value="ECO:0007669"/>
    <property type="project" value="UniProtKB-EC"/>
</dbReference>
<dbReference type="GO" id="GO:0071555">
    <property type="term" value="P:cell wall organization"/>
    <property type="evidence" value="ECO:0007669"/>
    <property type="project" value="UniProtKB-KW"/>
</dbReference>
<dbReference type="GO" id="GO:0030245">
    <property type="term" value="P:cellulose catabolic process"/>
    <property type="evidence" value="ECO:0007669"/>
    <property type="project" value="UniProtKB-KW"/>
</dbReference>
<dbReference type="FunFam" id="1.50.10.10:FF:000020">
    <property type="entry name" value="Endoglucanase"/>
    <property type="match status" value="1"/>
</dbReference>
<dbReference type="Gene3D" id="1.50.10.10">
    <property type="match status" value="1"/>
</dbReference>
<dbReference type="InterPro" id="IPR008928">
    <property type="entry name" value="6-hairpin_glycosidase_sf"/>
</dbReference>
<dbReference type="InterPro" id="IPR012341">
    <property type="entry name" value="6hp_glycosidase-like_sf"/>
</dbReference>
<dbReference type="InterPro" id="IPR001701">
    <property type="entry name" value="Glyco_hydro_9"/>
</dbReference>
<dbReference type="InterPro" id="IPR018221">
    <property type="entry name" value="Glyco_hydro_9_His_AS"/>
</dbReference>
<dbReference type="PANTHER" id="PTHR22298">
    <property type="entry name" value="ENDO-1,4-BETA-GLUCANASE"/>
    <property type="match status" value="1"/>
</dbReference>
<dbReference type="Pfam" id="PF00759">
    <property type="entry name" value="Glyco_hydro_9"/>
    <property type="match status" value="1"/>
</dbReference>
<dbReference type="SUPFAM" id="SSF48208">
    <property type="entry name" value="Six-hairpin glycosidases"/>
    <property type="match status" value="1"/>
</dbReference>
<dbReference type="PROSITE" id="PS60032">
    <property type="entry name" value="GH9_1"/>
    <property type="match status" value="1"/>
</dbReference>
<dbReference type="PROSITE" id="PS00592">
    <property type="entry name" value="GH9_2"/>
    <property type="match status" value="1"/>
</dbReference>